<dbReference type="EC" id="2.1.1.190" evidence="1"/>
<dbReference type="EMBL" id="CP000507">
    <property type="protein sequence ID" value="ABL99239.1"/>
    <property type="molecule type" value="Genomic_DNA"/>
</dbReference>
<dbReference type="RefSeq" id="WP_011759148.1">
    <property type="nucleotide sequence ID" value="NC_008700.1"/>
</dbReference>
<dbReference type="SMR" id="A1S4D3"/>
<dbReference type="STRING" id="326297.Sama_1032"/>
<dbReference type="KEGG" id="saz:Sama_1032"/>
<dbReference type="eggNOG" id="COG2265">
    <property type="taxonomic scope" value="Bacteria"/>
</dbReference>
<dbReference type="HOGENOM" id="CLU_014689_8_2_6"/>
<dbReference type="OrthoDB" id="9804590at2"/>
<dbReference type="Proteomes" id="UP000009175">
    <property type="component" value="Chromosome"/>
</dbReference>
<dbReference type="GO" id="GO:0051539">
    <property type="term" value="F:4 iron, 4 sulfur cluster binding"/>
    <property type="evidence" value="ECO:0007669"/>
    <property type="project" value="UniProtKB-KW"/>
</dbReference>
<dbReference type="GO" id="GO:0005506">
    <property type="term" value="F:iron ion binding"/>
    <property type="evidence" value="ECO:0007669"/>
    <property type="project" value="UniProtKB-UniRule"/>
</dbReference>
<dbReference type="GO" id="GO:0003723">
    <property type="term" value="F:RNA binding"/>
    <property type="evidence" value="ECO:0007669"/>
    <property type="project" value="InterPro"/>
</dbReference>
<dbReference type="GO" id="GO:0070041">
    <property type="term" value="F:rRNA (uridine-C5-)-methyltransferase activity"/>
    <property type="evidence" value="ECO:0007669"/>
    <property type="project" value="UniProtKB-UniRule"/>
</dbReference>
<dbReference type="GO" id="GO:0070475">
    <property type="term" value="P:rRNA base methylation"/>
    <property type="evidence" value="ECO:0007669"/>
    <property type="project" value="TreeGrafter"/>
</dbReference>
<dbReference type="CDD" id="cd02440">
    <property type="entry name" value="AdoMet_MTases"/>
    <property type="match status" value="1"/>
</dbReference>
<dbReference type="FunFam" id="3.40.50.150:FF:000009">
    <property type="entry name" value="23S rRNA (Uracil(1939)-C(5))-methyltransferase RlmD"/>
    <property type="match status" value="1"/>
</dbReference>
<dbReference type="FunFam" id="2.40.50.140:FF:000097">
    <property type="entry name" value="23S rRNA (uracil(1939)-C(5))-methyltransferase RlmD"/>
    <property type="match status" value="1"/>
</dbReference>
<dbReference type="Gene3D" id="2.40.50.1070">
    <property type="match status" value="1"/>
</dbReference>
<dbReference type="Gene3D" id="2.40.50.140">
    <property type="entry name" value="Nucleic acid-binding proteins"/>
    <property type="match status" value="1"/>
</dbReference>
<dbReference type="Gene3D" id="3.40.50.150">
    <property type="entry name" value="Vaccinia Virus protein VP39"/>
    <property type="match status" value="1"/>
</dbReference>
<dbReference type="HAMAP" id="MF_01010">
    <property type="entry name" value="23SrRNA_methyltr_RlmD"/>
    <property type="match status" value="1"/>
</dbReference>
<dbReference type="InterPro" id="IPR001566">
    <property type="entry name" value="23S_rRNA_MeTrfase_RlmD"/>
</dbReference>
<dbReference type="InterPro" id="IPR030390">
    <property type="entry name" value="MeTrfase_TrmA_AS"/>
</dbReference>
<dbReference type="InterPro" id="IPR012340">
    <property type="entry name" value="NA-bd_OB-fold"/>
</dbReference>
<dbReference type="InterPro" id="IPR029063">
    <property type="entry name" value="SAM-dependent_MTases_sf"/>
</dbReference>
<dbReference type="InterPro" id="IPR002792">
    <property type="entry name" value="TRAM_dom"/>
</dbReference>
<dbReference type="InterPro" id="IPR010280">
    <property type="entry name" value="U5_MeTrfase_fam"/>
</dbReference>
<dbReference type="NCBIfam" id="NF009639">
    <property type="entry name" value="PRK13168.1"/>
    <property type="match status" value="1"/>
</dbReference>
<dbReference type="NCBIfam" id="TIGR00479">
    <property type="entry name" value="rumA"/>
    <property type="match status" value="1"/>
</dbReference>
<dbReference type="PANTHER" id="PTHR11061:SF49">
    <property type="entry name" value="23S RRNA (URACIL(1939)-C(5))-METHYLTRANSFERASE RLMD"/>
    <property type="match status" value="1"/>
</dbReference>
<dbReference type="PANTHER" id="PTHR11061">
    <property type="entry name" value="RNA M5U METHYLTRANSFERASE"/>
    <property type="match status" value="1"/>
</dbReference>
<dbReference type="Pfam" id="PF01938">
    <property type="entry name" value="TRAM"/>
    <property type="match status" value="1"/>
</dbReference>
<dbReference type="Pfam" id="PF05958">
    <property type="entry name" value="tRNA_U5-meth_tr"/>
    <property type="match status" value="1"/>
</dbReference>
<dbReference type="SUPFAM" id="SSF50249">
    <property type="entry name" value="Nucleic acid-binding proteins"/>
    <property type="match status" value="1"/>
</dbReference>
<dbReference type="SUPFAM" id="SSF53335">
    <property type="entry name" value="S-adenosyl-L-methionine-dependent methyltransferases"/>
    <property type="match status" value="1"/>
</dbReference>
<dbReference type="PROSITE" id="PS51687">
    <property type="entry name" value="SAM_MT_RNA_M5U"/>
    <property type="match status" value="1"/>
</dbReference>
<dbReference type="PROSITE" id="PS50926">
    <property type="entry name" value="TRAM"/>
    <property type="match status" value="1"/>
</dbReference>
<dbReference type="PROSITE" id="PS01230">
    <property type="entry name" value="TRMA_1"/>
    <property type="match status" value="1"/>
</dbReference>
<protein>
    <recommendedName>
        <fullName evidence="1">23S rRNA (uracil(1939)-C(5))-methyltransferase RlmD</fullName>
        <ecNumber evidence="1">2.1.1.190</ecNumber>
    </recommendedName>
    <alternativeName>
        <fullName evidence="1">23S rRNA(m5U1939)-methyltransferase</fullName>
    </alternativeName>
</protein>
<feature type="chain" id="PRO_0000282060" description="23S rRNA (uracil(1939)-C(5))-methyltransferase RlmD">
    <location>
        <begin position="1"/>
        <end position="443"/>
    </location>
</feature>
<feature type="domain" description="TRAM" evidence="1">
    <location>
        <begin position="12"/>
        <end position="70"/>
    </location>
</feature>
<feature type="active site" description="Nucleophile" evidence="1">
    <location>
        <position position="399"/>
    </location>
</feature>
<feature type="binding site" evidence="1">
    <location>
        <position position="83"/>
    </location>
    <ligand>
        <name>[4Fe-4S] cluster</name>
        <dbReference type="ChEBI" id="CHEBI:49883"/>
    </ligand>
</feature>
<feature type="binding site" evidence="1">
    <location>
        <position position="89"/>
    </location>
    <ligand>
        <name>[4Fe-4S] cluster</name>
        <dbReference type="ChEBI" id="CHEBI:49883"/>
    </ligand>
</feature>
<feature type="binding site" evidence="1">
    <location>
        <position position="92"/>
    </location>
    <ligand>
        <name>[4Fe-4S] cluster</name>
        <dbReference type="ChEBI" id="CHEBI:49883"/>
    </ligand>
</feature>
<feature type="binding site" evidence="1">
    <location>
        <position position="171"/>
    </location>
    <ligand>
        <name>[4Fe-4S] cluster</name>
        <dbReference type="ChEBI" id="CHEBI:49883"/>
    </ligand>
</feature>
<feature type="binding site" evidence="1">
    <location>
        <position position="276"/>
    </location>
    <ligand>
        <name>S-adenosyl-L-methionine</name>
        <dbReference type="ChEBI" id="CHEBI:59789"/>
    </ligand>
</feature>
<feature type="binding site" evidence="1">
    <location>
        <position position="305"/>
    </location>
    <ligand>
        <name>S-adenosyl-L-methionine</name>
        <dbReference type="ChEBI" id="CHEBI:59789"/>
    </ligand>
</feature>
<feature type="binding site" evidence="1">
    <location>
        <position position="310"/>
    </location>
    <ligand>
        <name>S-adenosyl-L-methionine</name>
        <dbReference type="ChEBI" id="CHEBI:59789"/>
    </ligand>
</feature>
<feature type="binding site" evidence="1">
    <location>
        <position position="326"/>
    </location>
    <ligand>
        <name>S-adenosyl-L-methionine</name>
        <dbReference type="ChEBI" id="CHEBI:59789"/>
    </ligand>
</feature>
<feature type="binding site" evidence="1">
    <location>
        <position position="353"/>
    </location>
    <ligand>
        <name>S-adenosyl-L-methionine</name>
        <dbReference type="ChEBI" id="CHEBI:59789"/>
    </ligand>
</feature>
<feature type="binding site" evidence="1">
    <location>
        <position position="373"/>
    </location>
    <ligand>
        <name>S-adenosyl-L-methionine</name>
        <dbReference type="ChEBI" id="CHEBI:59789"/>
    </ligand>
</feature>
<proteinExistence type="inferred from homology"/>
<reference key="1">
    <citation type="submission" date="2006-12" db="EMBL/GenBank/DDBJ databases">
        <title>Complete sequence of Shewanella amazonensis SB2B.</title>
        <authorList>
            <consortium name="US DOE Joint Genome Institute"/>
            <person name="Copeland A."/>
            <person name="Lucas S."/>
            <person name="Lapidus A."/>
            <person name="Barry K."/>
            <person name="Detter J.C."/>
            <person name="Glavina del Rio T."/>
            <person name="Hammon N."/>
            <person name="Israni S."/>
            <person name="Dalin E."/>
            <person name="Tice H."/>
            <person name="Pitluck S."/>
            <person name="Munk A.C."/>
            <person name="Brettin T."/>
            <person name="Bruce D."/>
            <person name="Han C."/>
            <person name="Tapia R."/>
            <person name="Gilna P."/>
            <person name="Schmutz J."/>
            <person name="Larimer F."/>
            <person name="Land M."/>
            <person name="Hauser L."/>
            <person name="Kyrpides N."/>
            <person name="Mikhailova N."/>
            <person name="Fredrickson J."/>
            <person name="Richardson P."/>
        </authorList>
    </citation>
    <scope>NUCLEOTIDE SEQUENCE [LARGE SCALE GENOMIC DNA]</scope>
    <source>
        <strain>ATCC BAA-1098 / SB2B</strain>
    </source>
</reference>
<name>RLMD_SHEAM</name>
<keyword id="KW-0004">4Fe-4S</keyword>
<keyword id="KW-0408">Iron</keyword>
<keyword id="KW-0411">Iron-sulfur</keyword>
<keyword id="KW-0479">Metal-binding</keyword>
<keyword id="KW-0489">Methyltransferase</keyword>
<keyword id="KW-1185">Reference proteome</keyword>
<keyword id="KW-0698">rRNA processing</keyword>
<keyword id="KW-0949">S-adenosyl-L-methionine</keyword>
<keyword id="KW-0808">Transferase</keyword>
<sequence>MAQFFKAKPNQAKKLSQKIALKVQRLDHLGAGIAEHQGKVVFIPGALPGETVEVQLTEQKKNYARAKLQRVSEASPDRQTPPCPWYGKCGGCDLQHLSLPRQLEYKRQALGDIVSRSAAQTVTVNTDEVSGDSWHYRRRARLATLLDKETNQLALGFREEGSKSVVGIDSCAVLARPLSELISPFATLLNRLKGKQRLGHLELTQAANGLFAVLRVTAPLAQSDKKLLSAFADERQIALLLQGNEGELEFLSSGHELPYYQLDGLKLAFAPGNFIQVNGEVNQAMVAQAMNWLDVHAGERVLDLFCGVGNFSLPLAKQGAEVVGVEGVPEMVAQAKQNAAINGLDNLSFYCADLSEDLAAEPWLGKIDKLLLDPARAGAYESLKWLKKMKPAKVLYVSCNPASLARDSVLLFEAGYQLTRLGLVDMFPQTHHSEGMALFELVN</sequence>
<evidence type="ECO:0000255" key="1">
    <source>
        <dbReference type="HAMAP-Rule" id="MF_01010"/>
    </source>
</evidence>
<accession>A1S4D3</accession>
<comment type="function">
    <text evidence="1">Catalyzes the formation of 5-methyl-uridine at position 1939 (m5U1939) in 23S rRNA.</text>
</comment>
<comment type="catalytic activity">
    <reaction evidence="1">
        <text>uridine(1939) in 23S rRNA + S-adenosyl-L-methionine = 5-methyluridine(1939) in 23S rRNA + S-adenosyl-L-homocysteine + H(+)</text>
        <dbReference type="Rhea" id="RHEA:42908"/>
        <dbReference type="Rhea" id="RHEA-COMP:10278"/>
        <dbReference type="Rhea" id="RHEA-COMP:10279"/>
        <dbReference type="ChEBI" id="CHEBI:15378"/>
        <dbReference type="ChEBI" id="CHEBI:57856"/>
        <dbReference type="ChEBI" id="CHEBI:59789"/>
        <dbReference type="ChEBI" id="CHEBI:65315"/>
        <dbReference type="ChEBI" id="CHEBI:74447"/>
        <dbReference type="EC" id="2.1.1.190"/>
    </reaction>
</comment>
<comment type="similarity">
    <text evidence="1">Belongs to the class I-like SAM-binding methyltransferase superfamily. RNA M5U methyltransferase family. RlmD subfamily.</text>
</comment>
<gene>
    <name evidence="1" type="primary">rlmD</name>
    <name type="synonym">rumA</name>
    <name type="ordered locus">Sama_1032</name>
</gene>
<organism>
    <name type="scientific">Shewanella amazonensis (strain ATCC BAA-1098 / SB2B)</name>
    <dbReference type="NCBI Taxonomy" id="326297"/>
    <lineage>
        <taxon>Bacteria</taxon>
        <taxon>Pseudomonadati</taxon>
        <taxon>Pseudomonadota</taxon>
        <taxon>Gammaproteobacteria</taxon>
        <taxon>Alteromonadales</taxon>
        <taxon>Shewanellaceae</taxon>
        <taxon>Shewanella</taxon>
    </lineage>
</organism>